<accession>B7ISV1</accession>
<dbReference type="EC" id="2.1.1.182" evidence="1"/>
<dbReference type="EMBL" id="CP001186">
    <property type="protein sequence ID" value="ACK94034.1"/>
    <property type="molecule type" value="Genomic_DNA"/>
</dbReference>
<dbReference type="RefSeq" id="WP_000651548.1">
    <property type="nucleotide sequence ID" value="NC_011772.1"/>
</dbReference>
<dbReference type="SMR" id="B7ISV1"/>
<dbReference type="GeneID" id="72446842"/>
<dbReference type="KEGG" id="bcg:BCG9842_B5270"/>
<dbReference type="HOGENOM" id="CLU_041220_0_0_9"/>
<dbReference type="Proteomes" id="UP000006744">
    <property type="component" value="Chromosome"/>
</dbReference>
<dbReference type="GO" id="GO:0005829">
    <property type="term" value="C:cytosol"/>
    <property type="evidence" value="ECO:0007669"/>
    <property type="project" value="TreeGrafter"/>
</dbReference>
<dbReference type="GO" id="GO:0052908">
    <property type="term" value="F:16S rRNA (adenine(1518)-N(6)/adenine(1519)-N(6))-dimethyltransferase activity"/>
    <property type="evidence" value="ECO:0007669"/>
    <property type="project" value="UniProtKB-EC"/>
</dbReference>
<dbReference type="GO" id="GO:0003723">
    <property type="term" value="F:RNA binding"/>
    <property type="evidence" value="ECO:0007669"/>
    <property type="project" value="UniProtKB-KW"/>
</dbReference>
<dbReference type="CDD" id="cd02440">
    <property type="entry name" value="AdoMet_MTases"/>
    <property type="match status" value="1"/>
</dbReference>
<dbReference type="FunFam" id="1.10.8.100:FF:000002">
    <property type="entry name" value="Ribosomal RNA small subunit methyltransferase A"/>
    <property type="match status" value="1"/>
</dbReference>
<dbReference type="FunFam" id="3.40.50.150:FF:000023">
    <property type="entry name" value="Ribosomal RNA small subunit methyltransferase A"/>
    <property type="match status" value="1"/>
</dbReference>
<dbReference type="Gene3D" id="1.10.8.100">
    <property type="entry name" value="Ribosomal RNA adenine dimethylase-like, domain 2"/>
    <property type="match status" value="1"/>
</dbReference>
<dbReference type="Gene3D" id="3.40.50.150">
    <property type="entry name" value="Vaccinia Virus protein VP39"/>
    <property type="match status" value="1"/>
</dbReference>
<dbReference type="HAMAP" id="MF_00607">
    <property type="entry name" value="16SrRNA_methyltr_A"/>
    <property type="match status" value="1"/>
</dbReference>
<dbReference type="InterPro" id="IPR001737">
    <property type="entry name" value="KsgA/Erm"/>
</dbReference>
<dbReference type="InterPro" id="IPR023165">
    <property type="entry name" value="rRNA_Ade_diMease-like_C"/>
</dbReference>
<dbReference type="InterPro" id="IPR020596">
    <property type="entry name" value="rRNA_Ade_Mease_Trfase_CS"/>
</dbReference>
<dbReference type="InterPro" id="IPR020598">
    <property type="entry name" value="rRNA_Ade_methylase_Trfase_N"/>
</dbReference>
<dbReference type="InterPro" id="IPR011530">
    <property type="entry name" value="rRNA_adenine_dimethylase"/>
</dbReference>
<dbReference type="InterPro" id="IPR029063">
    <property type="entry name" value="SAM-dependent_MTases_sf"/>
</dbReference>
<dbReference type="NCBIfam" id="TIGR00755">
    <property type="entry name" value="ksgA"/>
    <property type="match status" value="1"/>
</dbReference>
<dbReference type="PANTHER" id="PTHR11727">
    <property type="entry name" value="DIMETHYLADENOSINE TRANSFERASE"/>
    <property type="match status" value="1"/>
</dbReference>
<dbReference type="PANTHER" id="PTHR11727:SF7">
    <property type="entry name" value="DIMETHYLADENOSINE TRANSFERASE-RELATED"/>
    <property type="match status" value="1"/>
</dbReference>
<dbReference type="Pfam" id="PF00398">
    <property type="entry name" value="RrnaAD"/>
    <property type="match status" value="1"/>
</dbReference>
<dbReference type="SMART" id="SM00650">
    <property type="entry name" value="rADc"/>
    <property type="match status" value="1"/>
</dbReference>
<dbReference type="SUPFAM" id="SSF53335">
    <property type="entry name" value="S-adenosyl-L-methionine-dependent methyltransferases"/>
    <property type="match status" value="1"/>
</dbReference>
<dbReference type="PROSITE" id="PS01131">
    <property type="entry name" value="RRNA_A_DIMETH"/>
    <property type="match status" value="1"/>
</dbReference>
<dbReference type="PROSITE" id="PS51689">
    <property type="entry name" value="SAM_RNA_A_N6_MT"/>
    <property type="match status" value="1"/>
</dbReference>
<evidence type="ECO:0000255" key="1">
    <source>
        <dbReference type="HAMAP-Rule" id="MF_00607"/>
    </source>
</evidence>
<reference key="1">
    <citation type="submission" date="2008-10" db="EMBL/GenBank/DDBJ databases">
        <title>Genome sequence of Bacillus cereus G9842.</title>
        <authorList>
            <person name="Dodson R.J."/>
            <person name="Durkin A.S."/>
            <person name="Rosovitz M.J."/>
            <person name="Rasko D.A."/>
            <person name="Hoffmaster A."/>
            <person name="Ravel J."/>
            <person name="Sutton G."/>
        </authorList>
    </citation>
    <scope>NUCLEOTIDE SEQUENCE [LARGE SCALE GENOMIC DNA]</scope>
    <source>
        <strain>G9842</strain>
    </source>
</reference>
<keyword id="KW-0963">Cytoplasm</keyword>
<keyword id="KW-0489">Methyltransferase</keyword>
<keyword id="KW-0694">RNA-binding</keyword>
<keyword id="KW-0698">rRNA processing</keyword>
<keyword id="KW-0949">S-adenosyl-L-methionine</keyword>
<keyword id="KW-0808">Transferase</keyword>
<protein>
    <recommendedName>
        <fullName evidence="1">Ribosomal RNA small subunit methyltransferase A</fullName>
        <ecNumber evidence="1">2.1.1.182</ecNumber>
    </recommendedName>
    <alternativeName>
        <fullName evidence="1">16S rRNA (adenine(1518)-N(6)/adenine(1519)-N(6))-dimethyltransferase</fullName>
    </alternativeName>
    <alternativeName>
        <fullName evidence="1">16S rRNA dimethyladenosine transferase</fullName>
    </alternativeName>
    <alternativeName>
        <fullName evidence="1">16S rRNA dimethylase</fullName>
    </alternativeName>
    <alternativeName>
        <fullName evidence="1">S-adenosylmethionine-6-N', N'-adenosyl(rRNA) dimethyltransferase</fullName>
    </alternativeName>
</protein>
<gene>
    <name evidence="1" type="primary">rsmA</name>
    <name evidence="1" type="synonym">ksgA</name>
    <name type="ordered locus">BCG9842_B5270</name>
</gene>
<organism>
    <name type="scientific">Bacillus cereus (strain G9842)</name>
    <dbReference type="NCBI Taxonomy" id="405531"/>
    <lineage>
        <taxon>Bacteria</taxon>
        <taxon>Bacillati</taxon>
        <taxon>Bacillota</taxon>
        <taxon>Bacilli</taxon>
        <taxon>Bacillales</taxon>
        <taxon>Bacillaceae</taxon>
        <taxon>Bacillus</taxon>
        <taxon>Bacillus cereus group</taxon>
    </lineage>
</organism>
<proteinExistence type="inferred from homology"/>
<feature type="chain" id="PRO_1000130242" description="Ribosomal RNA small subunit methyltransferase A">
    <location>
        <begin position="1"/>
        <end position="292"/>
    </location>
</feature>
<feature type="binding site" evidence="1">
    <location>
        <position position="28"/>
    </location>
    <ligand>
        <name>S-adenosyl-L-methionine</name>
        <dbReference type="ChEBI" id="CHEBI:59789"/>
    </ligand>
</feature>
<feature type="binding site" evidence="1">
    <location>
        <position position="30"/>
    </location>
    <ligand>
        <name>S-adenosyl-L-methionine</name>
        <dbReference type="ChEBI" id="CHEBI:59789"/>
    </ligand>
</feature>
<feature type="binding site" evidence="1">
    <location>
        <position position="55"/>
    </location>
    <ligand>
        <name>S-adenosyl-L-methionine</name>
        <dbReference type="ChEBI" id="CHEBI:59789"/>
    </ligand>
</feature>
<feature type="binding site" evidence="1">
    <location>
        <position position="76"/>
    </location>
    <ligand>
        <name>S-adenosyl-L-methionine</name>
        <dbReference type="ChEBI" id="CHEBI:59789"/>
    </ligand>
</feature>
<feature type="binding site" evidence="1">
    <location>
        <position position="101"/>
    </location>
    <ligand>
        <name>S-adenosyl-L-methionine</name>
        <dbReference type="ChEBI" id="CHEBI:59789"/>
    </ligand>
</feature>
<feature type="binding site" evidence="1">
    <location>
        <position position="126"/>
    </location>
    <ligand>
        <name>S-adenosyl-L-methionine</name>
        <dbReference type="ChEBI" id="CHEBI:59789"/>
    </ligand>
</feature>
<comment type="function">
    <text evidence="1">Specifically dimethylates two adjacent adenosines (A1518 and A1519) in the loop of a conserved hairpin near the 3'-end of 16S rRNA in the 30S particle. May play a critical role in biogenesis of 30S subunits.</text>
</comment>
<comment type="catalytic activity">
    <reaction evidence="1">
        <text>adenosine(1518)/adenosine(1519) in 16S rRNA + 4 S-adenosyl-L-methionine = N(6)-dimethyladenosine(1518)/N(6)-dimethyladenosine(1519) in 16S rRNA + 4 S-adenosyl-L-homocysteine + 4 H(+)</text>
        <dbReference type="Rhea" id="RHEA:19609"/>
        <dbReference type="Rhea" id="RHEA-COMP:10232"/>
        <dbReference type="Rhea" id="RHEA-COMP:10233"/>
        <dbReference type="ChEBI" id="CHEBI:15378"/>
        <dbReference type="ChEBI" id="CHEBI:57856"/>
        <dbReference type="ChEBI" id="CHEBI:59789"/>
        <dbReference type="ChEBI" id="CHEBI:74411"/>
        <dbReference type="ChEBI" id="CHEBI:74493"/>
        <dbReference type="EC" id="2.1.1.182"/>
    </reaction>
</comment>
<comment type="subcellular location">
    <subcellularLocation>
        <location evidence="1">Cytoplasm</location>
    </subcellularLocation>
</comment>
<comment type="similarity">
    <text evidence="1">Belongs to the class I-like SAM-binding methyltransferase superfamily. rRNA adenine N(6)-methyltransferase family. RsmA subfamily.</text>
</comment>
<name>RSMA_BACC2</name>
<sequence>MKDIATPNRTKDIVEKYGFSFKKSLGQNFLIDTNVLNRIVDHAEIGSESGAIEIGPGIGALTEQLAKRAKKVVAFEIDQRLLPILDETLAPYGNVTVINKDVLKADVHEVFNEQFEEGQDVMVVANLPYYITTPILFKLLEEKLPVRGFVVMMQKEVGDRLAAKPGTKEYGSLSIAIQYYTEVETVMTVPRTVFVPQPNVDSAIIRLLKRPKPVVEVTDETFFFEVVRASFAQRRKTLMNNLSNNLNGFPKDKELLDRILTEVGIDPKRRGETLSIEEFATLSNALVLHKLS</sequence>